<comment type="function">
    <text evidence="1">Binds to 23S rRNA.</text>
</comment>
<comment type="subunit">
    <text evidence="1">Part of the 50S ribosomal subunit.</text>
</comment>
<comment type="subcellular location">
    <subcellularLocation>
        <location>Plastid</location>
    </subcellularLocation>
</comment>
<comment type="similarity">
    <text evidence="1">Belongs to the universal ribosomal protein uL14 family.</text>
</comment>
<comment type="caution">
    <text evidence="2">Only inflorescences, fruits, starved seedlings and stressed stem tips are green in this organism.</text>
</comment>
<accession>A8W3L8</accession>
<reference key="1">
    <citation type="journal article" date="2007" name="BMC Plant Biol.">
        <title>Complete plastid genome sequences suggest strong selection for retention of photosynthetic genes in the parasitic plant genus Cuscuta.</title>
        <authorList>
            <person name="McNeal J.R."/>
            <person name="Kuehl J.V."/>
            <person name="Boore J.L."/>
            <person name="dePamphilis C.W."/>
        </authorList>
    </citation>
    <scope>NUCLEOTIDE SEQUENCE [LARGE SCALE GENOMIC DNA]</scope>
</reference>
<gene>
    <name evidence="1" type="primary">rpl14</name>
</gene>
<protein>
    <recommendedName>
        <fullName evidence="1">Large ribosomal subunit protein uL14c</fullName>
    </recommendedName>
    <alternativeName>
        <fullName evidence="2">50S ribosomal protein L14, plastid</fullName>
    </alternativeName>
</protein>
<sequence length="122" mass="13619">MIQSQTHLNVADNSGARTIMCIRIIGSSNRRYAHIGDIIVAVIKDAVPNMTLEKSEVVRAVIVRTRKELKRDNGIILRYDDNAAVIIDKEGNPKGTRIFGAIPRELRKLNFNKIVSLAPEVL</sequence>
<geneLocation type="plastid"/>
<feature type="chain" id="PRO_0000355874" description="Large ribosomal subunit protein uL14c">
    <location>
        <begin position="1"/>
        <end position="122"/>
    </location>
</feature>
<keyword id="KW-0934">Plastid</keyword>
<keyword id="KW-0687">Ribonucleoprotein</keyword>
<keyword id="KW-0689">Ribosomal protein</keyword>
<keyword id="KW-0694">RNA-binding</keyword>
<keyword id="KW-0699">rRNA-binding</keyword>
<proteinExistence type="inferred from homology"/>
<evidence type="ECO:0000255" key="1">
    <source>
        <dbReference type="HAMAP-Rule" id="MF_01367"/>
    </source>
</evidence>
<evidence type="ECO:0000305" key="2"/>
<name>RK14_CUSOB</name>
<organism>
    <name type="scientific">Cuscuta obtusiflora</name>
    <name type="common">Peruvian dodder</name>
    <dbReference type="NCBI Taxonomy" id="437280"/>
    <lineage>
        <taxon>Eukaryota</taxon>
        <taxon>Viridiplantae</taxon>
        <taxon>Streptophyta</taxon>
        <taxon>Embryophyta</taxon>
        <taxon>Tracheophyta</taxon>
        <taxon>Spermatophyta</taxon>
        <taxon>Magnoliopsida</taxon>
        <taxon>eudicotyledons</taxon>
        <taxon>Gunneridae</taxon>
        <taxon>Pentapetalae</taxon>
        <taxon>asterids</taxon>
        <taxon>lamiids</taxon>
        <taxon>Solanales</taxon>
        <taxon>Convolvulaceae</taxon>
        <taxon>Cuscuteae</taxon>
        <taxon>Cuscuta</taxon>
        <taxon>Cuscuta subgen. Grammica</taxon>
        <taxon>Cuscuta sect. Cleistogrammica</taxon>
    </lineage>
</organism>
<dbReference type="EMBL" id="EU189133">
    <property type="protein sequence ID" value="ABW20593.1"/>
    <property type="molecule type" value="Genomic_DNA"/>
</dbReference>
<dbReference type="RefSeq" id="YP_001531248.1">
    <property type="nucleotide sequence ID" value="NC_009949.1"/>
</dbReference>
<dbReference type="SMR" id="A8W3L8"/>
<dbReference type="GeneID" id="5714803"/>
<dbReference type="GO" id="GO:0022625">
    <property type="term" value="C:cytosolic large ribosomal subunit"/>
    <property type="evidence" value="ECO:0007669"/>
    <property type="project" value="TreeGrafter"/>
</dbReference>
<dbReference type="GO" id="GO:0009536">
    <property type="term" value="C:plastid"/>
    <property type="evidence" value="ECO:0007669"/>
    <property type="project" value="UniProtKB-SubCell"/>
</dbReference>
<dbReference type="GO" id="GO:0070180">
    <property type="term" value="F:large ribosomal subunit rRNA binding"/>
    <property type="evidence" value="ECO:0007669"/>
    <property type="project" value="TreeGrafter"/>
</dbReference>
<dbReference type="GO" id="GO:0003735">
    <property type="term" value="F:structural constituent of ribosome"/>
    <property type="evidence" value="ECO:0007669"/>
    <property type="project" value="InterPro"/>
</dbReference>
<dbReference type="GO" id="GO:0006412">
    <property type="term" value="P:translation"/>
    <property type="evidence" value="ECO:0007669"/>
    <property type="project" value="InterPro"/>
</dbReference>
<dbReference type="CDD" id="cd00337">
    <property type="entry name" value="Ribosomal_uL14"/>
    <property type="match status" value="1"/>
</dbReference>
<dbReference type="FunFam" id="2.40.150.20:FF:000002">
    <property type="entry name" value="50S ribosomal protein L14, chloroplastic"/>
    <property type="match status" value="1"/>
</dbReference>
<dbReference type="Gene3D" id="2.40.150.20">
    <property type="entry name" value="Ribosomal protein L14"/>
    <property type="match status" value="1"/>
</dbReference>
<dbReference type="HAMAP" id="MF_01367">
    <property type="entry name" value="Ribosomal_uL14"/>
    <property type="match status" value="1"/>
</dbReference>
<dbReference type="InterPro" id="IPR000218">
    <property type="entry name" value="Ribosomal_uL14"/>
</dbReference>
<dbReference type="InterPro" id="IPR005745">
    <property type="entry name" value="Ribosomal_uL14_bac-type"/>
</dbReference>
<dbReference type="InterPro" id="IPR019972">
    <property type="entry name" value="Ribosomal_uL14_CS"/>
</dbReference>
<dbReference type="InterPro" id="IPR036853">
    <property type="entry name" value="Ribosomal_uL14_sf"/>
</dbReference>
<dbReference type="NCBIfam" id="TIGR01067">
    <property type="entry name" value="rplN_bact"/>
    <property type="match status" value="1"/>
</dbReference>
<dbReference type="PANTHER" id="PTHR11761">
    <property type="entry name" value="50S/60S RIBOSOMAL PROTEIN L14/L23"/>
    <property type="match status" value="1"/>
</dbReference>
<dbReference type="PANTHER" id="PTHR11761:SF3">
    <property type="entry name" value="LARGE RIBOSOMAL SUBUNIT PROTEIN UL14M"/>
    <property type="match status" value="1"/>
</dbReference>
<dbReference type="Pfam" id="PF00238">
    <property type="entry name" value="Ribosomal_L14"/>
    <property type="match status" value="1"/>
</dbReference>
<dbReference type="SMART" id="SM01374">
    <property type="entry name" value="Ribosomal_L14"/>
    <property type="match status" value="1"/>
</dbReference>
<dbReference type="SUPFAM" id="SSF50193">
    <property type="entry name" value="Ribosomal protein L14"/>
    <property type="match status" value="1"/>
</dbReference>
<dbReference type="PROSITE" id="PS00049">
    <property type="entry name" value="RIBOSOMAL_L14"/>
    <property type="match status" value="1"/>
</dbReference>